<dbReference type="EC" id="6.1.1.12" evidence="1"/>
<dbReference type="EMBL" id="CP000786">
    <property type="protein sequence ID" value="ABZ98197.1"/>
    <property type="molecule type" value="Genomic_DNA"/>
</dbReference>
<dbReference type="RefSeq" id="WP_012389067.1">
    <property type="nucleotide sequence ID" value="NC_010602.1"/>
</dbReference>
<dbReference type="SMR" id="B0SSV7"/>
<dbReference type="STRING" id="456481.LEPBI_I2095"/>
<dbReference type="KEGG" id="lbi:LEPBI_I2095"/>
<dbReference type="HOGENOM" id="CLU_014330_3_2_12"/>
<dbReference type="OrthoDB" id="9802326at2"/>
<dbReference type="BioCyc" id="LBIF456481:LEPBI_RS10350-MONOMER"/>
<dbReference type="Proteomes" id="UP000001847">
    <property type="component" value="Chromosome I"/>
</dbReference>
<dbReference type="GO" id="GO:0005737">
    <property type="term" value="C:cytoplasm"/>
    <property type="evidence" value="ECO:0007669"/>
    <property type="project" value="UniProtKB-SubCell"/>
</dbReference>
<dbReference type="GO" id="GO:0004815">
    <property type="term" value="F:aspartate-tRNA ligase activity"/>
    <property type="evidence" value="ECO:0007669"/>
    <property type="project" value="UniProtKB-UniRule"/>
</dbReference>
<dbReference type="GO" id="GO:0005524">
    <property type="term" value="F:ATP binding"/>
    <property type="evidence" value="ECO:0007669"/>
    <property type="project" value="UniProtKB-UniRule"/>
</dbReference>
<dbReference type="GO" id="GO:0003676">
    <property type="term" value="F:nucleic acid binding"/>
    <property type="evidence" value="ECO:0007669"/>
    <property type="project" value="InterPro"/>
</dbReference>
<dbReference type="GO" id="GO:0006422">
    <property type="term" value="P:aspartyl-tRNA aminoacylation"/>
    <property type="evidence" value="ECO:0007669"/>
    <property type="project" value="UniProtKB-UniRule"/>
</dbReference>
<dbReference type="CDD" id="cd00777">
    <property type="entry name" value="AspRS_core"/>
    <property type="match status" value="1"/>
</dbReference>
<dbReference type="CDD" id="cd04317">
    <property type="entry name" value="EcAspRS_like_N"/>
    <property type="match status" value="1"/>
</dbReference>
<dbReference type="Gene3D" id="3.30.930.10">
    <property type="entry name" value="Bira Bifunctional Protein, Domain 2"/>
    <property type="match status" value="1"/>
</dbReference>
<dbReference type="Gene3D" id="3.30.1360.30">
    <property type="entry name" value="GAD-like domain"/>
    <property type="match status" value="1"/>
</dbReference>
<dbReference type="Gene3D" id="2.40.50.140">
    <property type="entry name" value="Nucleic acid-binding proteins"/>
    <property type="match status" value="1"/>
</dbReference>
<dbReference type="HAMAP" id="MF_00044">
    <property type="entry name" value="Asp_tRNA_synth_type1"/>
    <property type="match status" value="1"/>
</dbReference>
<dbReference type="InterPro" id="IPR004364">
    <property type="entry name" value="Aa-tRNA-synt_II"/>
</dbReference>
<dbReference type="InterPro" id="IPR006195">
    <property type="entry name" value="aa-tRNA-synth_II"/>
</dbReference>
<dbReference type="InterPro" id="IPR045864">
    <property type="entry name" value="aa-tRNA-synth_II/BPL/LPL"/>
</dbReference>
<dbReference type="InterPro" id="IPR004524">
    <property type="entry name" value="Asp-tRNA-ligase_1"/>
</dbReference>
<dbReference type="InterPro" id="IPR047089">
    <property type="entry name" value="Asp-tRNA-ligase_1_N"/>
</dbReference>
<dbReference type="InterPro" id="IPR002312">
    <property type="entry name" value="Asp/Asn-tRNA-synth_IIb"/>
</dbReference>
<dbReference type="InterPro" id="IPR047090">
    <property type="entry name" value="AspRS_core"/>
</dbReference>
<dbReference type="InterPro" id="IPR004115">
    <property type="entry name" value="GAD-like_sf"/>
</dbReference>
<dbReference type="InterPro" id="IPR029351">
    <property type="entry name" value="GAD_dom"/>
</dbReference>
<dbReference type="InterPro" id="IPR012340">
    <property type="entry name" value="NA-bd_OB-fold"/>
</dbReference>
<dbReference type="InterPro" id="IPR004365">
    <property type="entry name" value="NA-bd_OB_tRNA"/>
</dbReference>
<dbReference type="NCBIfam" id="TIGR00459">
    <property type="entry name" value="aspS_bact"/>
    <property type="match status" value="1"/>
</dbReference>
<dbReference type="NCBIfam" id="NF001750">
    <property type="entry name" value="PRK00476.1"/>
    <property type="match status" value="1"/>
</dbReference>
<dbReference type="PANTHER" id="PTHR22594:SF5">
    <property type="entry name" value="ASPARTATE--TRNA LIGASE, MITOCHONDRIAL"/>
    <property type="match status" value="1"/>
</dbReference>
<dbReference type="PANTHER" id="PTHR22594">
    <property type="entry name" value="ASPARTYL/LYSYL-TRNA SYNTHETASE"/>
    <property type="match status" value="1"/>
</dbReference>
<dbReference type="Pfam" id="PF02938">
    <property type="entry name" value="GAD"/>
    <property type="match status" value="1"/>
</dbReference>
<dbReference type="Pfam" id="PF00152">
    <property type="entry name" value="tRNA-synt_2"/>
    <property type="match status" value="1"/>
</dbReference>
<dbReference type="Pfam" id="PF01336">
    <property type="entry name" value="tRNA_anti-codon"/>
    <property type="match status" value="1"/>
</dbReference>
<dbReference type="PRINTS" id="PR01042">
    <property type="entry name" value="TRNASYNTHASP"/>
</dbReference>
<dbReference type="SUPFAM" id="SSF55681">
    <property type="entry name" value="Class II aaRS and biotin synthetases"/>
    <property type="match status" value="1"/>
</dbReference>
<dbReference type="SUPFAM" id="SSF55261">
    <property type="entry name" value="GAD domain-like"/>
    <property type="match status" value="1"/>
</dbReference>
<dbReference type="SUPFAM" id="SSF50249">
    <property type="entry name" value="Nucleic acid-binding proteins"/>
    <property type="match status" value="1"/>
</dbReference>
<dbReference type="PROSITE" id="PS50862">
    <property type="entry name" value="AA_TRNA_LIGASE_II"/>
    <property type="match status" value="1"/>
</dbReference>
<gene>
    <name evidence="1" type="primary">aspS</name>
    <name type="ordered locus">LEPBI_I2095</name>
</gene>
<feature type="chain" id="PRO_1000091008" description="Aspartate--tRNA ligase">
    <location>
        <begin position="1"/>
        <end position="601"/>
    </location>
</feature>
<feature type="region of interest" description="Aspartate" evidence="1">
    <location>
        <begin position="207"/>
        <end position="210"/>
    </location>
</feature>
<feature type="binding site" evidence="1">
    <location>
        <position position="183"/>
    </location>
    <ligand>
        <name>L-aspartate</name>
        <dbReference type="ChEBI" id="CHEBI:29991"/>
    </ligand>
</feature>
<feature type="binding site" evidence="1">
    <location>
        <begin position="229"/>
        <end position="231"/>
    </location>
    <ligand>
        <name>ATP</name>
        <dbReference type="ChEBI" id="CHEBI:30616"/>
    </ligand>
</feature>
<feature type="binding site" evidence="1">
    <location>
        <position position="229"/>
    </location>
    <ligand>
        <name>L-aspartate</name>
        <dbReference type="ChEBI" id="CHEBI:29991"/>
    </ligand>
</feature>
<feature type="binding site" evidence="1">
    <location>
        <position position="238"/>
    </location>
    <ligand>
        <name>ATP</name>
        <dbReference type="ChEBI" id="CHEBI:30616"/>
    </ligand>
</feature>
<feature type="binding site" evidence="1">
    <location>
        <position position="456"/>
    </location>
    <ligand>
        <name>L-aspartate</name>
        <dbReference type="ChEBI" id="CHEBI:29991"/>
    </ligand>
</feature>
<feature type="binding site" evidence="1">
    <location>
        <position position="497"/>
    </location>
    <ligand>
        <name>ATP</name>
        <dbReference type="ChEBI" id="CHEBI:30616"/>
    </ligand>
</feature>
<feature type="binding site" evidence="1">
    <location>
        <position position="504"/>
    </location>
    <ligand>
        <name>L-aspartate</name>
        <dbReference type="ChEBI" id="CHEBI:29991"/>
    </ligand>
</feature>
<feature type="binding site" evidence="1">
    <location>
        <begin position="549"/>
        <end position="552"/>
    </location>
    <ligand>
        <name>ATP</name>
        <dbReference type="ChEBI" id="CHEBI:30616"/>
    </ligand>
</feature>
<reference key="1">
    <citation type="journal article" date="2008" name="PLoS ONE">
        <title>Genome sequence of the saprophyte Leptospira biflexa provides insights into the evolution of Leptospira and the pathogenesis of leptospirosis.</title>
        <authorList>
            <person name="Picardeau M."/>
            <person name="Bulach D.M."/>
            <person name="Bouchier C."/>
            <person name="Zuerner R.L."/>
            <person name="Zidane N."/>
            <person name="Wilson P.J."/>
            <person name="Creno S."/>
            <person name="Kuczek E.S."/>
            <person name="Bommezzadri S."/>
            <person name="Davis J.C."/>
            <person name="McGrath A."/>
            <person name="Johnson M.J."/>
            <person name="Boursaux-Eude C."/>
            <person name="Seemann T."/>
            <person name="Rouy Z."/>
            <person name="Coppel R.L."/>
            <person name="Rood J.I."/>
            <person name="Lajus A."/>
            <person name="Davies J.K."/>
            <person name="Medigue C."/>
            <person name="Adler B."/>
        </authorList>
    </citation>
    <scope>NUCLEOTIDE SEQUENCE [LARGE SCALE GENOMIC DNA]</scope>
    <source>
        <strain>Patoc 1 / ATCC 23582 / Paris</strain>
    </source>
</reference>
<protein>
    <recommendedName>
        <fullName evidence="1">Aspartate--tRNA ligase</fullName>
        <ecNumber evidence="1">6.1.1.12</ecNumber>
    </recommendedName>
    <alternativeName>
        <fullName evidence="1">Aspartyl-tRNA synthetase</fullName>
        <shortName evidence="1">AspRS</shortName>
    </alternativeName>
</protein>
<evidence type="ECO:0000255" key="1">
    <source>
        <dbReference type="HAMAP-Rule" id="MF_00044"/>
    </source>
</evidence>
<keyword id="KW-0030">Aminoacyl-tRNA synthetase</keyword>
<keyword id="KW-0067">ATP-binding</keyword>
<keyword id="KW-0963">Cytoplasm</keyword>
<keyword id="KW-0436">Ligase</keyword>
<keyword id="KW-0547">Nucleotide-binding</keyword>
<keyword id="KW-0648">Protein biosynthesis</keyword>
<keyword id="KW-1185">Reference proteome</keyword>
<proteinExistence type="inferred from homology"/>
<name>SYD_LEPBP</name>
<sequence>MNQWVTSEYKNRISATSVSDASVGKTLFLSGWAFRYRDQGGVIFIDLRDRSGILQIVARKEILGDDFSKVEKIRSEFVIAVKGKLSLRDADSINPKMETGKYELIAESVEILNSSKTPPFTLDEFDPSGEEIRLKYRYLDMRREELRDRLVLRHKLTFALREYLDSKSFLEIETPILNKSTPEGARDFLVPSRLNAGEFYALPQSPQLFKQILMIGGMERYFQIVKCFRDEDLRADRQPEFTQLDMEFSFVTEEDIRREIEAMWAFALKKVFQLEVNAPFMTMPYHVAMEEYGSDKPDIRFGMKLVNVSEHVKSCDFQVFTGAITSGGVVKAICVPGGSVISRKEIEDLTAWLSRDYRAKGLAYMKHGANGLESTITKRFSPEALEAIAKAVGSKEGDMVFFGADSSKIVNASLGALRLKLSEKYDPPKVPYSFHWVVDFPMFEIDETTKSWTFLHHPFTSPKEEDFQKLRDWKDGKEVDLSSIGAKAYDLVLNGTEIGGGSIRIHNPEIQSLVLEAIGIGEEDAKSKFGFLLDALSFGAPPHGGIAFGVDRIMMLLTGGTSIRDVIAFPKTQKGTCMMSEAPGPVEAKQLEELKLRVVTI</sequence>
<accession>B0SSV7</accession>
<comment type="function">
    <text evidence="1">Catalyzes the attachment of L-aspartate to tRNA(Asp) in a two-step reaction: L-aspartate is first activated by ATP to form Asp-AMP and then transferred to the acceptor end of tRNA(Asp).</text>
</comment>
<comment type="catalytic activity">
    <reaction evidence="1">
        <text>tRNA(Asp) + L-aspartate + ATP = L-aspartyl-tRNA(Asp) + AMP + diphosphate</text>
        <dbReference type="Rhea" id="RHEA:19649"/>
        <dbReference type="Rhea" id="RHEA-COMP:9660"/>
        <dbReference type="Rhea" id="RHEA-COMP:9678"/>
        <dbReference type="ChEBI" id="CHEBI:29991"/>
        <dbReference type="ChEBI" id="CHEBI:30616"/>
        <dbReference type="ChEBI" id="CHEBI:33019"/>
        <dbReference type="ChEBI" id="CHEBI:78442"/>
        <dbReference type="ChEBI" id="CHEBI:78516"/>
        <dbReference type="ChEBI" id="CHEBI:456215"/>
        <dbReference type="EC" id="6.1.1.12"/>
    </reaction>
</comment>
<comment type="subunit">
    <text evidence="1">Homodimer.</text>
</comment>
<comment type="subcellular location">
    <subcellularLocation>
        <location evidence="1">Cytoplasm</location>
    </subcellularLocation>
</comment>
<comment type="similarity">
    <text evidence="1">Belongs to the class-II aminoacyl-tRNA synthetase family. Type 1 subfamily.</text>
</comment>
<organism>
    <name type="scientific">Leptospira biflexa serovar Patoc (strain Patoc 1 / ATCC 23582 / Paris)</name>
    <dbReference type="NCBI Taxonomy" id="456481"/>
    <lineage>
        <taxon>Bacteria</taxon>
        <taxon>Pseudomonadati</taxon>
        <taxon>Spirochaetota</taxon>
        <taxon>Spirochaetia</taxon>
        <taxon>Leptospirales</taxon>
        <taxon>Leptospiraceae</taxon>
        <taxon>Leptospira</taxon>
    </lineage>
</organism>